<keyword id="KW-0963">Cytoplasm</keyword>
<keyword id="KW-0501">Molybdenum cofactor biosynthesis</keyword>
<keyword id="KW-1185">Reference proteome</keyword>
<gene>
    <name evidence="1" type="primary">fdhD</name>
    <name type="ordered locus">WS1149</name>
</gene>
<reference key="1">
    <citation type="journal article" date="1991" name="Arch. Microbiol.">
        <title>Cloning and nucleotide sequence of the structural genes encoding the formate dehydrogenase of Wolinella succinogenes.</title>
        <authorList>
            <person name="Bokranz M."/>
            <person name="Gutmann M."/>
            <person name="Koertner C."/>
            <person name="Kojro E."/>
            <person name="Fahrenholz F."/>
            <person name="Lauterbach F."/>
            <person name="Kroeger A."/>
        </authorList>
    </citation>
    <scope>NUCLEOTIDE SEQUENCE [GENOMIC DNA]</scope>
</reference>
<reference key="2">
    <citation type="journal article" date="2003" name="Proc. Natl. Acad. Sci. U.S.A.">
        <title>Complete genome sequence and analysis of Wolinella succinogenes.</title>
        <authorList>
            <person name="Baar C."/>
            <person name="Eppinger M."/>
            <person name="Raddatz G."/>
            <person name="Simon J."/>
            <person name="Lanz C."/>
            <person name="Klimmek O."/>
            <person name="Nandakumar R."/>
            <person name="Gross R."/>
            <person name="Rosinus A."/>
            <person name="Keller H."/>
            <person name="Jagtap P."/>
            <person name="Linke B."/>
            <person name="Meyer F."/>
            <person name="Lederer H."/>
            <person name="Schuster S.C."/>
        </authorList>
    </citation>
    <scope>NUCLEOTIDE SEQUENCE [LARGE SCALE GENOMIC DNA]</scope>
    <source>
        <strain>ATCC 29543 / DSM 1740 / CCUG 13145 / JCM 31913 / LMG 7466 / NCTC 11488 / FDC 602W</strain>
    </source>
</reference>
<dbReference type="EMBL" id="X54057">
    <property type="protein sequence ID" value="CAA37992.1"/>
    <property type="molecule type" value="Genomic_DNA"/>
</dbReference>
<dbReference type="EMBL" id="BX571660">
    <property type="protein sequence ID" value="CAE10236.1"/>
    <property type="molecule type" value="Genomic_DNA"/>
</dbReference>
<dbReference type="PIR" id="S18216">
    <property type="entry name" value="S18216"/>
</dbReference>
<dbReference type="RefSeq" id="WP_011139024.1">
    <property type="nucleotide sequence ID" value="NC_005090.1"/>
</dbReference>
<dbReference type="SMR" id="P28181"/>
<dbReference type="STRING" id="273121.WS1149"/>
<dbReference type="KEGG" id="wsu:WS1149"/>
<dbReference type="eggNOG" id="COG1526">
    <property type="taxonomic scope" value="Bacteria"/>
</dbReference>
<dbReference type="HOGENOM" id="CLU_056887_4_1_7"/>
<dbReference type="Proteomes" id="UP000000422">
    <property type="component" value="Chromosome"/>
</dbReference>
<dbReference type="GO" id="GO:0005737">
    <property type="term" value="C:cytoplasm"/>
    <property type="evidence" value="ECO:0007669"/>
    <property type="project" value="UniProtKB-SubCell"/>
</dbReference>
<dbReference type="GO" id="GO:0097163">
    <property type="term" value="F:sulfur carrier activity"/>
    <property type="evidence" value="ECO:0007669"/>
    <property type="project" value="UniProtKB-UniRule"/>
</dbReference>
<dbReference type="GO" id="GO:0016783">
    <property type="term" value="F:sulfurtransferase activity"/>
    <property type="evidence" value="ECO:0007669"/>
    <property type="project" value="InterPro"/>
</dbReference>
<dbReference type="GO" id="GO:0006777">
    <property type="term" value="P:Mo-molybdopterin cofactor biosynthetic process"/>
    <property type="evidence" value="ECO:0007669"/>
    <property type="project" value="UniProtKB-UniRule"/>
</dbReference>
<dbReference type="Gene3D" id="3.10.20.10">
    <property type="match status" value="1"/>
</dbReference>
<dbReference type="Gene3D" id="3.40.140.10">
    <property type="entry name" value="Cytidine Deaminase, domain 2"/>
    <property type="match status" value="1"/>
</dbReference>
<dbReference type="HAMAP" id="MF_00187">
    <property type="entry name" value="FdhD"/>
    <property type="match status" value="1"/>
</dbReference>
<dbReference type="InterPro" id="IPR016193">
    <property type="entry name" value="Cytidine_deaminase-like"/>
</dbReference>
<dbReference type="InterPro" id="IPR003786">
    <property type="entry name" value="FdhD"/>
</dbReference>
<dbReference type="NCBIfam" id="TIGR00129">
    <property type="entry name" value="fdhD_narQ"/>
    <property type="match status" value="1"/>
</dbReference>
<dbReference type="NCBIfam" id="NF001943">
    <property type="entry name" value="PRK00724.1-2"/>
    <property type="match status" value="1"/>
</dbReference>
<dbReference type="PANTHER" id="PTHR30592">
    <property type="entry name" value="FORMATE DEHYDROGENASE"/>
    <property type="match status" value="1"/>
</dbReference>
<dbReference type="PANTHER" id="PTHR30592:SF1">
    <property type="entry name" value="SULFUR CARRIER PROTEIN FDHD"/>
    <property type="match status" value="1"/>
</dbReference>
<dbReference type="Pfam" id="PF02634">
    <property type="entry name" value="FdhD-NarQ"/>
    <property type="match status" value="1"/>
</dbReference>
<dbReference type="PIRSF" id="PIRSF015626">
    <property type="entry name" value="FdhD"/>
    <property type="match status" value="1"/>
</dbReference>
<dbReference type="SUPFAM" id="SSF53927">
    <property type="entry name" value="Cytidine deaminase-like"/>
    <property type="match status" value="1"/>
</dbReference>
<accession>P28181</accession>
<organism>
    <name type="scientific">Wolinella succinogenes (strain ATCC 29543 / DSM 1740 / CCUG 13145 / JCM 31913 / LMG 7466 / NCTC 11488 / FDC 602W)</name>
    <name type="common">Vibrio succinogenes</name>
    <dbReference type="NCBI Taxonomy" id="273121"/>
    <lineage>
        <taxon>Bacteria</taxon>
        <taxon>Pseudomonadati</taxon>
        <taxon>Campylobacterota</taxon>
        <taxon>Epsilonproteobacteria</taxon>
        <taxon>Campylobacterales</taxon>
        <taxon>Helicobacteraceae</taxon>
        <taxon>Wolinella</taxon>
    </lineage>
</organism>
<sequence length="286" mass="31695">MRHTDRFVKKVVIERIGDQRVLAEEEDVVIKEERISLYLNGTKLMSMMSLPSDQDAHAVGFLMSEGVIEKIEDLKSVQISSDGSSVYVEALINHENITNLFKEKTLTSGCCVGVTGNLEGNVLRKFIATPMQISLERIWEGMEEFEMSSHLFHETGCVHKASLLLEDGSKITAEDIGRHNAIDKVMGKARLGRIDTEKAVLVVSGRLSMEMVVKAVMHNIPMIVSRAAATFLGIKTAQELGVTLVGFARGEKMNIYTHSGRVDLRACKRKRGVTLHAPNQSSSLLR</sequence>
<evidence type="ECO:0000255" key="1">
    <source>
        <dbReference type="HAMAP-Rule" id="MF_00187"/>
    </source>
</evidence>
<name>FDHD_WOLSU</name>
<protein>
    <recommendedName>
        <fullName evidence="1">Sulfur carrier protein FdhD</fullName>
    </recommendedName>
</protein>
<proteinExistence type="inferred from homology"/>
<comment type="function">
    <text evidence="1">Required for formate dehydrogenase (FDH) activity. Acts as a sulfur carrier protein that transfers sulfur from IscS to the molybdenum cofactor prior to its insertion into FDH.</text>
</comment>
<comment type="subcellular location">
    <subcellularLocation>
        <location evidence="1">Cytoplasm</location>
    </subcellularLocation>
</comment>
<comment type="similarity">
    <text evidence="1">Belongs to the FdhD family.</text>
</comment>
<feature type="chain" id="PRO_0000152930" description="Sulfur carrier protein FdhD">
    <location>
        <begin position="1"/>
        <end position="286"/>
    </location>
</feature>
<feature type="active site" description="Cysteine persulfide intermediate" evidence="1">
    <location>
        <position position="110"/>
    </location>
</feature>
<feature type="binding site" evidence="1">
    <location>
        <begin position="247"/>
        <end position="252"/>
    </location>
    <ligand>
        <name>Mo-bis(molybdopterin guanine dinucleotide)</name>
        <dbReference type="ChEBI" id="CHEBI:60539"/>
    </ligand>
</feature>